<sequence>MSRFGPFPDPSALLDHDEAAHAFATMLDGGARDEQIAAFLVALADRGETMVEIAAAAQAMRDRLIPIEAPAGAIDVCGTGGDGHHTLNVSTAVSIVVAACDVPVAKHGNRAASSKSGAADTLEALGLDMERADRQAQEQLADLGICFLFAGTRHPAMKRIMPIRKAIGRRTIFNLMGPLANPARVTRQLVGIARPAYVPVYAEALHRLGTDHSRVISGDEGLDELSLAGGNEVAVVTPDGVRMQRSSAADAGLPTRSLAEIRGGDAAFNARALRRLLEGETGAYRDAVLYNAAAALIVAGAVDTLTEGVEEAAEAIDKGLANALLNCWIAYK</sequence>
<protein>
    <recommendedName>
        <fullName evidence="1">Anthranilate phosphoribosyltransferase</fullName>
        <ecNumber evidence="1">2.4.2.18</ecNumber>
    </recommendedName>
</protein>
<evidence type="ECO:0000255" key="1">
    <source>
        <dbReference type="HAMAP-Rule" id="MF_00211"/>
    </source>
</evidence>
<accession>Q1GUW8</accession>
<comment type="function">
    <text evidence="1">Catalyzes the transfer of the phosphoribosyl group of 5-phosphorylribose-1-pyrophosphate (PRPP) to anthranilate to yield N-(5'-phosphoribosyl)-anthranilate (PRA).</text>
</comment>
<comment type="catalytic activity">
    <reaction evidence="1">
        <text>N-(5-phospho-beta-D-ribosyl)anthranilate + diphosphate = 5-phospho-alpha-D-ribose 1-diphosphate + anthranilate</text>
        <dbReference type="Rhea" id="RHEA:11768"/>
        <dbReference type="ChEBI" id="CHEBI:16567"/>
        <dbReference type="ChEBI" id="CHEBI:18277"/>
        <dbReference type="ChEBI" id="CHEBI:33019"/>
        <dbReference type="ChEBI" id="CHEBI:58017"/>
        <dbReference type="EC" id="2.4.2.18"/>
    </reaction>
</comment>
<comment type="cofactor">
    <cofactor evidence="1">
        <name>Mg(2+)</name>
        <dbReference type="ChEBI" id="CHEBI:18420"/>
    </cofactor>
    <text evidence="1">Binds 2 magnesium ions per monomer.</text>
</comment>
<comment type="pathway">
    <text evidence="1">Amino-acid biosynthesis; L-tryptophan biosynthesis; L-tryptophan from chorismate: step 2/5.</text>
</comment>
<comment type="subunit">
    <text evidence="1">Homodimer.</text>
</comment>
<comment type="similarity">
    <text evidence="1">Belongs to the anthranilate phosphoribosyltransferase family.</text>
</comment>
<keyword id="KW-0028">Amino-acid biosynthesis</keyword>
<keyword id="KW-0057">Aromatic amino acid biosynthesis</keyword>
<keyword id="KW-0328">Glycosyltransferase</keyword>
<keyword id="KW-0460">Magnesium</keyword>
<keyword id="KW-0479">Metal-binding</keyword>
<keyword id="KW-1185">Reference proteome</keyword>
<keyword id="KW-0808">Transferase</keyword>
<keyword id="KW-0822">Tryptophan biosynthesis</keyword>
<reference key="1">
    <citation type="journal article" date="2009" name="Proc. Natl. Acad. Sci. U.S.A.">
        <title>The genomic basis of trophic strategy in marine bacteria.</title>
        <authorList>
            <person name="Lauro F.M."/>
            <person name="McDougald D."/>
            <person name="Thomas T."/>
            <person name="Williams T.J."/>
            <person name="Egan S."/>
            <person name="Rice S."/>
            <person name="DeMaere M.Z."/>
            <person name="Ting L."/>
            <person name="Ertan H."/>
            <person name="Johnson J."/>
            <person name="Ferriera S."/>
            <person name="Lapidus A."/>
            <person name="Anderson I."/>
            <person name="Kyrpides N."/>
            <person name="Munk A.C."/>
            <person name="Detter C."/>
            <person name="Han C.S."/>
            <person name="Brown M.V."/>
            <person name="Robb F.T."/>
            <person name="Kjelleberg S."/>
            <person name="Cavicchioli R."/>
        </authorList>
    </citation>
    <scope>NUCLEOTIDE SEQUENCE [LARGE SCALE GENOMIC DNA]</scope>
    <source>
        <strain>DSM 13593 / LMG 18877 / RB2256</strain>
    </source>
</reference>
<proteinExistence type="inferred from homology"/>
<organism>
    <name type="scientific">Sphingopyxis alaskensis (strain DSM 13593 / LMG 18877 / RB2256)</name>
    <name type="common">Sphingomonas alaskensis</name>
    <dbReference type="NCBI Taxonomy" id="317655"/>
    <lineage>
        <taxon>Bacteria</taxon>
        <taxon>Pseudomonadati</taxon>
        <taxon>Pseudomonadota</taxon>
        <taxon>Alphaproteobacteria</taxon>
        <taxon>Sphingomonadales</taxon>
        <taxon>Sphingomonadaceae</taxon>
        <taxon>Sphingopyxis</taxon>
    </lineage>
</organism>
<dbReference type="EC" id="2.4.2.18" evidence="1"/>
<dbReference type="EMBL" id="CP000356">
    <property type="protein sequence ID" value="ABF52554.1"/>
    <property type="molecule type" value="Genomic_DNA"/>
</dbReference>
<dbReference type="RefSeq" id="WP_011541144.1">
    <property type="nucleotide sequence ID" value="NC_008048.1"/>
</dbReference>
<dbReference type="SMR" id="Q1GUW8"/>
<dbReference type="STRING" id="317655.Sala_0836"/>
<dbReference type="KEGG" id="sal:Sala_0836"/>
<dbReference type="eggNOG" id="COG0547">
    <property type="taxonomic scope" value="Bacteria"/>
</dbReference>
<dbReference type="HOGENOM" id="CLU_034315_2_1_5"/>
<dbReference type="OrthoDB" id="9806430at2"/>
<dbReference type="UniPathway" id="UPA00035">
    <property type="reaction ID" value="UER00041"/>
</dbReference>
<dbReference type="Proteomes" id="UP000006578">
    <property type="component" value="Chromosome"/>
</dbReference>
<dbReference type="GO" id="GO:0005829">
    <property type="term" value="C:cytosol"/>
    <property type="evidence" value="ECO:0007669"/>
    <property type="project" value="TreeGrafter"/>
</dbReference>
<dbReference type="GO" id="GO:0004048">
    <property type="term" value="F:anthranilate phosphoribosyltransferase activity"/>
    <property type="evidence" value="ECO:0007669"/>
    <property type="project" value="UniProtKB-UniRule"/>
</dbReference>
<dbReference type="GO" id="GO:0000287">
    <property type="term" value="F:magnesium ion binding"/>
    <property type="evidence" value="ECO:0007669"/>
    <property type="project" value="UniProtKB-UniRule"/>
</dbReference>
<dbReference type="GO" id="GO:0000162">
    <property type="term" value="P:L-tryptophan biosynthetic process"/>
    <property type="evidence" value="ECO:0007669"/>
    <property type="project" value="UniProtKB-UniRule"/>
</dbReference>
<dbReference type="FunFam" id="3.40.1030.10:FF:000002">
    <property type="entry name" value="Anthranilate phosphoribosyltransferase"/>
    <property type="match status" value="1"/>
</dbReference>
<dbReference type="Gene3D" id="3.40.1030.10">
    <property type="entry name" value="Nucleoside phosphorylase/phosphoribosyltransferase catalytic domain"/>
    <property type="match status" value="1"/>
</dbReference>
<dbReference type="Gene3D" id="1.20.970.10">
    <property type="entry name" value="Transferase, Pyrimidine Nucleoside Phosphorylase, Chain C"/>
    <property type="match status" value="1"/>
</dbReference>
<dbReference type="HAMAP" id="MF_00211">
    <property type="entry name" value="TrpD"/>
    <property type="match status" value="1"/>
</dbReference>
<dbReference type="InterPro" id="IPR005940">
    <property type="entry name" value="Anthranilate_Pribosyl_Tfrase"/>
</dbReference>
<dbReference type="InterPro" id="IPR000312">
    <property type="entry name" value="Glycosyl_Trfase_fam3"/>
</dbReference>
<dbReference type="InterPro" id="IPR017459">
    <property type="entry name" value="Glycosyl_Trfase_fam3_N_dom"/>
</dbReference>
<dbReference type="InterPro" id="IPR036320">
    <property type="entry name" value="Glycosyl_Trfase_fam3_N_dom_sf"/>
</dbReference>
<dbReference type="InterPro" id="IPR035902">
    <property type="entry name" value="Nuc_phospho_transferase"/>
</dbReference>
<dbReference type="NCBIfam" id="TIGR01245">
    <property type="entry name" value="trpD"/>
    <property type="match status" value="1"/>
</dbReference>
<dbReference type="PANTHER" id="PTHR43285">
    <property type="entry name" value="ANTHRANILATE PHOSPHORIBOSYLTRANSFERASE"/>
    <property type="match status" value="1"/>
</dbReference>
<dbReference type="PANTHER" id="PTHR43285:SF2">
    <property type="entry name" value="ANTHRANILATE PHOSPHORIBOSYLTRANSFERASE"/>
    <property type="match status" value="1"/>
</dbReference>
<dbReference type="Pfam" id="PF02885">
    <property type="entry name" value="Glycos_trans_3N"/>
    <property type="match status" value="1"/>
</dbReference>
<dbReference type="Pfam" id="PF00591">
    <property type="entry name" value="Glycos_transf_3"/>
    <property type="match status" value="1"/>
</dbReference>
<dbReference type="SUPFAM" id="SSF52418">
    <property type="entry name" value="Nucleoside phosphorylase/phosphoribosyltransferase catalytic domain"/>
    <property type="match status" value="1"/>
</dbReference>
<dbReference type="SUPFAM" id="SSF47648">
    <property type="entry name" value="Nucleoside phosphorylase/phosphoribosyltransferase N-terminal domain"/>
    <property type="match status" value="1"/>
</dbReference>
<name>TRPD_SPHAL</name>
<feature type="chain" id="PRO_0000325467" description="Anthranilate phosphoribosyltransferase">
    <location>
        <begin position="1"/>
        <end position="332"/>
    </location>
</feature>
<feature type="binding site" evidence="1">
    <location>
        <position position="78"/>
    </location>
    <ligand>
        <name>5-phospho-alpha-D-ribose 1-diphosphate</name>
        <dbReference type="ChEBI" id="CHEBI:58017"/>
    </ligand>
</feature>
<feature type="binding site" evidence="1">
    <location>
        <position position="78"/>
    </location>
    <ligand>
        <name>anthranilate</name>
        <dbReference type="ChEBI" id="CHEBI:16567"/>
        <label>1</label>
    </ligand>
</feature>
<feature type="binding site" evidence="1">
    <location>
        <begin position="81"/>
        <end position="82"/>
    </location>
    <ligand>
        <name>5-phospho-alpha-D-ribose 1-diphosphate</name>
        <dbReference type="ChEBI" id="CHEBI:58017"/>
    </ligand>
</feature>
<feature type="binding site" evidence="1">
    <location>
        <position position="86"/>
    </location>
    <ligand>
        <name>5-phospho-alpha-D-ribose 1-diphosphate</name>
        <dbReference type="ChEBI" id="CHEBI:58017"/>
    </ligand>
</feature>
<feature type="binding site" evidence="1">
    <location>
        <begin position="88"/>
        <end position="91"/>
    </location>
    <ligand>
        <name>5-phospho-alpha-D-ribose 1-diphosphate</name>
        <dbReference type="ChEBI" id="CHEBI:58017"/>
    </ligand>
</feature>
<feature type="binding site" evidence="1">
    <location>
        <position position="90"/>
    </location>
    <ligand>
        <name>Mg(2+)</name>
        <dbReference type="ChEBI" id="CHEBI:18420"/>
        <label>1</label>
    </ligand>
</feature>
<feature type="binding site" evidence="1">
    <location>
        <begin position="106"/>
        <end position="114"/>
    </location>
    <ligand>
        <name>5-phospho-alpha-D-ribose 1-diphosphate</name>
        <dbReference type="ChEBI" id="CHEBI:58017"/>
    </ligand>
</feature>
<feature type="binding site" evidence="1">
    <location>
        <position position="109"/>
    </location>
    <ligand>
        <name>anthranilate</name>
        <dbReference type="ChEBI" id="CHEBI:16567"/>
        <label>1</label>
    </ligand>
</feature>
<feature type="binding site" evidence="1">
    <location>
        <position position="118"/>
    </location>
    <ligand>
        <name>5-phospho-alpha-D-ribose 1-diphosphate</name>
        <dbReference type="ChEBI" id="CHEBI:58017"/>
    </ligand>
</feature>
<feature type="binding site" evidence="1">
    <location>
        <position position="164"/>
    </location>
    <ligand>
        <name>anthranilate</name>
        <dbReference type="ChEBI" id="CHEBI:16567"/>
        <label>2</label>
    </ligand>
</feature>
<feature type="binding site" evidence="1">
    <location>
        <position position="223"/>
    </location>
    <ligand>
        <name>Mg(2+)</name>
        <dbReference type="ChEBI" id="CHEBI:18420"/>
        <label>2</label>
    </ligand>
</feature>
<feature type="binding site" evidence="1">
    <location>
        <position position="224"/>
    </location>
    <ligand>
        <name>Mg(2+)</name>
        <dbReference type="ChEBI" id="CHEBI:18420"/>
        <label>1</label>
    </ligand>
</feature>
<feature type="binding site" evidence="1">
    <location>
        <position position="224"/>
    </location>
    <ligand>
        <name>Mg(2+)</name>
        <dbReference type="ChEBI" id="CHEBI:18420"/>
        <label>2</label>
    </ligand>
</feature>
<gene>
    <name evidence="1" type="primary">trpD</name>
    <name type="ordered locus">Sala_0836</name>
</gene>